<keyword id="KW-0687">Ribonucleoprotein</keyword>
<keyword id="KW-0689">Ribosomal protein</keyword>
<keyword id="KW-0694">RNA-binding</keyword>
<keyword id="KW-0699">rRNA-binding</keyword>
<keyword id="KW-0820">tRNA-binding</keyword>
<dbReference type="EMBL" id="FM209186">
    <property type="protein sequence ID" value="CAW25388.1"/>
    <property type="molecule type" value="Genomic_DNA"/>
</dbReference>
<dbReference type="RefSeq" id="WP_003093742.1">
    <property type="nucleotide sequence ID" value="NC_011770.1"/>
</dbReference>
<dbReference type="SMR" id="B7V640"/>
<dbReference type="GeneID" id="77219194"/>
<dbReference type="KEGG" id="pag:PLES_06611"/>
<dbReference type="HOGENOM" id="CLU_072226_1_1_6"/>
<dbReference type="GO" id="GO:0015935">
    <property type="term" value="C:small ribosomal subunit"/>
    <property type="evidence" value="ECO:0007669"/>
    <property type="project" value="InterPro"/>
</dbReference>
<dbReference type="GO" id="GO:0019843">
    <property type="term" value="F:rRNA binding"/>
    <property type="evidence" value="ECO:0007669"/>
    <property type="project" value="UniProtKB-UniRule"/>
</dbReference>
<dbReference type="GO" id="GO:0003735">
    <property type="term" value="F:structural constituent of ribosome"/>
    <property type="evidence" value="ECO:0007669"/>
    <property type="project" value="InterPro"/>
</dbReference>
<dbReference type="GO" id="GO:0000049">
    <property type="term" value="F:tRNA binding"/>
    <property type="evidence" value="ECO:0007669"/>
    <property type="project" value="UniProtKB-UniRule"/>
</dbReference>
<dbReference type="GO" id="GO:0006412">
    <property type="term" value="P:translation"/>
    <property type="evidence" value="ECO:0007669"/>
    <property type="project" value="UniProtKB-UniRule"/>
</dbReference>
<dbReference type="CDD" id="cd14869">
    <property type="entry name" value="uS7_Bacteria"/>
    <property type="match status" value="1"/>
</dbReference>
<dbReference type="FunFam" id="1.10.455.10:FF:000001">
    <property type="entry name" value="30S ribosomal protein S7"/>
    <property type="match status" value="1"/>
</dbReference>
<dbReference type="Gene3D" id="1.10.455.10">
    <property type="entry name" value="Ribosomal protein S7 domain"/>
    <property type="match status" value="1"/>
</dbReference>
<dbReference type="HAMAP" id="MF_00480_B">
    <property type="entry name" value="Ribosomal_uS7_B"/>
    <property type="match status" value="1"/>
</dbReference>
<dbReference type="InterPro" id="IPR000235">
    <property type="entry name" value="Ribosomal_uS7"/>
</dbReference>
<dbReference type="InterPro" id="IPR005717">
    <property type="entry name" value="Ribosomal_uS7_bac/org-type"/>
</dbReference>
<dbReference type="InterPro" id="IPR020606">
    <property type="entry name" value="Ribosomal_uS7_CS"/>
</dbReference>
<dbReference type="InterPro" id="IPR023798">
    <property type="entry name" value="Ribosomal_uS7_dom"/>
</dbReference>
<dbReference type="InterPro" id="IPR036823">
    <property type="entry name" value="Ribosomal_uS7_dom_sf"/>
</dbReference>
<dbReference type="NCBIfam" id="TIGR01029">
    <property type="entry name" value="rpsG_bact"/>
    <property type="match status" value="1"/>
</dbReference>
<dbReference type="PANTHER" id="PTHR11205">
    <property type="entry name" value="RIBOSOMAL PROTEIN S7"/>
    <property type="match status" value="1"/>
</dbReference>
<dbReference type="Pfam" id="PF00177">
    <property type="entry name" value="Ribosomal_S7"/>
    <property type="match status" value="1"/>
</dbReference>
<dbReference type="PIRSF" id="PIRSF002122">
    <property type="entry name" value="RPS7p_RPS7a_RPS5e_RPS7o"/>
    <property type="match status" value="1"/>
</dbReference>
<dbReference type="SUPFAM" id="SSF47973">
    <property type="entry name" value="Ribosomal protein S7"/>
    <property type="match status" value="1"/>
</dbReference>
<dbReference type="PROSITE" id="PS00052">
    <property type="entry name" value="RIBOSOMAL_S7"/>
    <property type="match status" value="1"/>
</dbReference>
<gene>
    <name evidence="1" type="primary">rpsG</name>
    <name type="ordered locus">PLES_06611</name>
</gene>
<sequence>MPRRRVAAKREVLADPKYGSQILAKFMNHVMESGKKAVAERIVYGALDKVKERGKADPLETFEKALDAIAPLVEVKSRRVGGATYQVPVEVRPSRRNALAMRWLVDFARKRGEKSMALRLAGELLDAAEGKGAAVKKREDVHRMAEANKAFSHYRF</sequence>
<comment type="function">
    <text evidence="1">One of the primary rRNA binding proteins, it binds directly to 16S rRNA where it nucleates assembly of the head domain of the 30S subunit. Is located at the subunit interface close to the decoding center, probably blocks exit of the E-site tRNA.</text>
</comment>
<comment type="subunit">
    <text evidence="1">Part of the 30S ribosomal subunit. Contacts proteins S9 and S11.</text>
</comment>
<comment type="similarity">
    <text evidence="1">Belongs to the universal ribosomal protein uS7 family.</text>
</comment>
<name>RS7_PSEA8</name>
<protein>
    <recommendedName>
        <fullName evidence="1">Small ribosomal subunit protein uS7</fullName>
    </recommendedName>
    <alternativeName>
        <fullName evidence="2">30S ribosomal protein S7</fullName>
    </alternativeName>
</protein>
<proteinExistence type="inferred from homology"/>
<feature type="chain" id="PRO_1000125986" description="Small ribosomal subunit protein uS7">
    <location>
        <begin position="1"/>
        <end position="156"/>
    </location>
</feature>
<reference key="1">
    <citation type="journal article" date="2009" name="Genome Res.">
        <title>Newly introduced genomic prophage islands are critical determinants of in vivo competitiveness in the Liverpool epidemic strain of Pseudomonas aeruginosa.</title>
        <authorList>
            <person name="Winstanley C."/>
            <person name="Langille M.G.I."/>
            <person name="Fothergill J.L."/>
            <person name="Kukavica-Ibrulj I."/>
            <person name="Paradis-Bleau C."/>
            <person name="Sanschagrin F."/>
            <person name="Thomson N.R."/>
            <person name="Winsor G.L."/>
            <person name="Quail M.A."/>
            <person name="Lennard N."/>
            <person name="Bignell A."/>
            <person name="Clarke L."/>
            <person name="Seeger K."/>
            <person name="Saunders D."/>
            <person name="Harris D."/>
            <person name="Parkhill J."/>
            <person name="Hancock R.E.W."/>
            <person name="Brinkman F.S.L."/>
            <person name="Levesque R.C."/>
        </authorList>
    </citation>
    <scope>NUCLEOTIDE SEQUENCE [LARGE SCALE GENOMIC DNA]</scope>
    <source>
        <strain>LESB58</strain>
    </source>
</reference>
<accession>B7V640</accession>
<organism>
    <name type="scientific">Pseudomonas aeruginosa (strain LESB58)</name>
    <dbReference type="NCBI Taxonomy" id="557722"/>
    <lineage>
        <taxon>Bacteria</taxon>
        <taxon>Pseudomonadati</taxon>
        <taxon>Pseudomonadota</taxon>
        <taxon>Gammaproteobacteria</taxon>
        <taxon>Pseudomonadales</taxon>
        <taxon>Pseudomonadaceae</taxon>
        <taxon>Pseudomonas</taxon>
    </lineage>
</organism>
<evidence type="ECO:0000255" key="1">
    <source>
        <dbReference type="HAMAP-Rule" id="MF_00480"/>
    </source>
</evidence>
<evidence type="ECO:0000305" key="2"/>